<evidence type="ECO:0000255" key="1"/>
<evidence type="ECO:0000305" key="2"/>
<gene>
    <name type="primary">SMR1</name>
</gene>
<comment type="function">
    <text>Transcriptional activator that is required for post-fertilization events. It is required for the developmental events that occur in the female organ after fertilization.</text>
</comment>
<comment type="subcellular location">
    <subcellularLocation>
        <location>Nucleus</location>
    </subcellularLocation>
</comment>
<comment type="similarity">
    <text evidence="2">To N.crassa mta-2.</text>
</comment>
<keyword id="KW-0010">Activator</keyword>
<keyword id="KW-0238">DNA-binding</keyword>
<keyword id="KW-0278">Fertilization</keyword>
<keyword id="KW-0539">Nucleus</keyword>
<keyword id="KW-0804">Transcription</keyword>
<keyword id="KW-0805">Transcription regulation</keyword>
<organism>
    <name type="scientific">Podospora anserina</name>
    <name type="common">Pleurage anserina</name>
    <dbReference type="NCBI Taxonomy" id="2587412"/>
    <lineage>
        <taxon>Eukaryota</taxon>
        <taxon>Fungi</taxon>
        <taxon>Dikarya</taxon>
        <taxon>Ascomycota</taxon>
        <taxon>Pezizomycotina</taxon>
        <taxon>Sordariomycetes</taxon>
        <taxon>Sordariomycetidae</taxon>
        <taxon>Sordariales</taxon>
        <taxon>Podosporaceae</taxon>
        <taxon>Podospora</taxon>
    </lineage>
</organism>
<protein>
    <recommendedName>
        <fullName>Sporulation minus regulator 1</fullName>
    </recommendedName>
</protein>
<reference key="1">
    <citation type="journal article" date="1993" name="Mol. Gen. Genet.">
        <title>The mat- allele of Podospora anserina contains three regulatory genes required for the development of fertilized female organs.</title>
        <authorList>
            <person name="Debuchy R."/>
            <person name="Arnaise S."/>
            <person name="Lecellier G."/>
        </authorList>
    </citation>
    <scope>NUCLEOTIDE SEQUENCE [GENOMIC DNA]</scope>
</reference>
<dbReference type="EMBL" id="X73830">
    <property type="protein sequence ID" value="CAA52052.1"/>
    <property type="molecule type" value="Genomic_DNA"/>
</dbReference>
<dbReference type="PIR" id="S39889">
    <property type="entry name" value="S39889"/>
</dbReference>
<dbReference type="GO" id="GO:0005634">
    <property type="term" value="C:nucleus"/>
    <property type="evidence" value="ECO:0007669"/>
    <property type="project" value="UniProtKB-SubCell"/>
</dbReference>
<dbReference type="GO" id="GO:0003677">
    <property type="term" value="F:DNA binding"/>
    <property type="evidence" value="ECO:0007669"/>
    <property type="project" value="UniProtKB-KW"/>
</dbReference>
<dbReference type="GO" id="GO:0007338">
    <property type="term" value="P:single fertilization"/>
    <property type="evidence" value="ECO:0007669"/>
    <property type="project" value="UniProtKB-KW"/>
</dbReference>
<dbReference type="InterPro" id="IPR031472">
    <property type="entry name" value="MAT1-1-2/MatA-2/Smr1"/>
</dbReference>
<dbReference type="Pfam" id="PF17043">
    <property type="entry name" value="MAT1-1-2"/>
    <property type="match status" value="1"/>
</dbReference>
<sequence length="356" mass="40857">MDHRDLSQVTLLMESTLIRTALRTDIQQFEKSFEQIIEQAGVFLATTEEHFISLSLVVMDEDVLIRHLCGFLASKLAIEGFLSFHQQTIQRTSGGDASLAKQVKAATVFVLELIQTLIYHKEAADYPGKHLGMMYDRDVKYFGGTLFHLNPQVNLDEELPELDDYYEDVDELTNYYHGEKLSHPLRQLPGNPWHKFFGNFPETRVEHAADTALFRENPRPGDLTVSIPGTILFLIPEFRQEHEKFRQLMLEHSQLPLPLLLEEARKERVQVIQRRLANVHHGNVEYDSLEPLCRENTDMIPRPEYTLEGNRTFGMQNLTVNSPDLIGDALPEGRIANVASQLEGFPARFLFTNKNK</sequence>
<name>SMR1_PODAS</name>
<proteinExistence type="predicted"/>
<accession>Q08142</accession>
<feature type="chain" id="PRO_0000071982" description="Sporulation minus regulator 1">
    <location>
        <begin position="1"/>
        <end position="356"/>
    </location>
</feature>
<feature type="DNA-binding region" evidence="1">
    <location>
        <begin position="183"/>
        <end position="199"/>
    </location>
</feature>